<name>PPAL_RAT</name>
<protein>
    <recommendedName>
        <fullName>Lysosomal acid phosphatase</fullName>
        <shortName>LAP</shortName>
        <ecNumber>3.1.3.2</ecNumber>
    </recommendedName>
</protein>
<proteinExistence type="evidence at protein level"/>
<evidence type="ECO:0000250" key="1"/>
<evidence type="ECO:0000250" key="2">
    <source>
        <dbReference type="UniProtKB" id="P11117"/>
    </source>
</evidence>
<evidence type="ECO:0000255" key="3"/>
<evidence type="ECO:0000305" key="4"/>
<keyword id="KW-0903">Direct protein sequencing</keyword>
<keyword id="KW-1015">Disulfide bond</keyword>
<keyword id="KW-0325">Glycoprotein</keyword>
<keyword id="KW-0378">Hydrolase</keyword>
<keyword id="KW-0458">Lysosome</keyword>
<keyword id="KW-0472">Membrane</keyword>
<keyword id="KW-1185">Reference proteome</keyword>
<keyword id="KW-0732">Signal</keyword>
<keyword id="KW-0812">Transmembrane</keyword>
<keyword id="KW-1133">Transmembrane helix</keyword>
<dbReference type="EC" id="3.1.3.2"/>
<dbReference type="EMBL" id="M27893">
    <property type="protein sequence ID" value="AAA40744.1"/>
    <property type="molecule type" value="mRNA"/>
</dbReference>
<dbReference type="PIR" id="A33395">
    <property type="entry name" value="A33395"/>
</dbReference>
<dbReference type="SMR" id="P20611"/>
<dbReference type="FunCoup" id="P20611">
    <property type="interactions" value="1459"/>
</dbReference>
<dbReference type="STRING" id="10116.ENSRNOP00000018620"/>
<dbReference type="GlyCosmos" id="P20611">
    <property type="glycosylation" value="9 sites, No reported glycans"/>
</dbReference>
<dbReference type="GlyGen" id="P20611">
    <property type="glycosylation" value="9 sites"/>
</dbReference>
<dbReference type="PhosphoSitePlus" id="P20611"/>
<dbReference type="jPOST" id="P20611"/>
<dbReference type="PaxDb" id="10116-ENSRNOP00000018620"/>
<dbReference type="UCSC" id="RGD:2021">
    <property type="organism name" value="rat"/>
</dbReference>
<dbReference type="AGR" id="RGD:2021"/>
<dbReference type="RGD" id="2021">
    <property type="gene designation" value="Acp2"/>
</dbReference>
<dbReference type="eggNOG" id="KOG3720">
    <property type="taxonomic scope" value="Eukaryota"/>
</dbReference>
<dbReference type="InParanoid" id="P20611"/>
<dbReference type="OrthoDB" id="258392at2759"/>
<dbReference type="PhylomeDB" id="P20611"/>
<dbReference type="PRO" id="PR:P20611"/>
<dbReference type="Proteomes" id="UP000002494">
    <property type="component" value="Unplaced"/>
</dbReference>
<dbReference type="GO" id="GO:0043202">
    <property type="term" value="C:lysosomal lumen"/>
    <property type="evidence" value="ECO:0007669"/>
    <property type="project" value="UniProtKB-SubCell"/>
</dbReference>
<dbReference type="GO" id="GO:0005765">
    <property type="term" value="C:lysosomal membrane"/>
    <property type="evidence" value="ECO:0007669"/>
    <property type="project" value="UniProtKB-SubCell"/>
</dbReference>
<dbReference type="GO" id="GO:0005764">
    <property type="term" value="C:lysosome"/>
    <property type="evidence" value="ECO:0000266"/>
    <property type="project" value="RGD"/>
</dbReference>
<dbReference type="GO" id="GO:0045202">
    <property type="term" value="C:synapse"/>
    <property type="evidence" value="ECO:0007669"/>
    <property type="project" value="GOC"/>
</dbReference>
<dbReference type="GO" id="GO:0003993">
    <property type="term" value="F:acid phosphatase activity"/>
    <property type="evidence" value="ECO:0000314"/>
    <property type="project" value="RGD"/>
</dbReference>
<dbReference type="GO" id="GO:0004721">
    <property type="term" value="F:phosphoprotein phosphatase activity"/>
    <property type="evidence" value="ECO:0000314"/>
    <property type="project" value="RGD"/>
</dbReference>
<dbReference type="GO" id="GO:0001784">
    <property type="term" value="F:phosphotyrosine residue binding"/>
    <property type="evidence" value="ECO:0000314"/>
    <property type="project" value="RGD"/>
</dbReference>
<dbReference type="GO" id="GO:0048102">
    <property type="term" value="P:autophagic cell death"/>
    <property type="evidence" value="ECO:0000314"/>
    <property type="project" value="RGD"/>
</dbReference>
<dbReference type="GO" id="GO:0007268">
    <property type="term" value="P:chemical synaptic transmission"/>
    <property type="evidence" value="ECO:0000303"/>
    <property type="project" value="RGD"/>
</dbReference>
<dbReference type="GO" id="GO:0007040">
    <property type="term" value="P:lysosome organization"/>
    <property type="evidence" value="ECO:0000266"/>
    <property type="project" value="RGD"/>
</dbReference>
<dbReference type="GO" id="GO:0070305">
    <property type="term" value="P:response to cGMP"/>
    <property type="evidence" value="ECO:0000314"/>
    <property type="project" value="RGD"/>
</dbReference>
<dbReference type="GO" id="GO:0001501">
    <property type="term" value="P:skeletal system development"/>
    <property type="evidence" value="ECO:0000266"/>
    <property type="project" value="RGD"/>
</dbReference>
<dbReference type="CDD" id="cd07061">
    <property type="entry name" value="HP_HAP_like"/>
    <property type="match status" value="1"/>
</dbReference>
<dbReference type="FunFam" id="3.40.50.1240:FF:000010">
    <property type="entry name" value="Prostatic acid phosphatase"/>
    <property type="match status" value="1"/>
</dbReference>
<dbReference type="Gene3D" id="3.40.50.1240">
    <property type="entry name" value="Phosphoglycerate mutase-like"/>
    <property type="match status" value="1"/>
</dbReference>
<dbReference type="InterPro" id="IPR033379">
    <property type="entry name" value="Acid_Pase_AS"/>
</dbReference>
<dbReference type="InterPro" id="IPR000560">
    <property type="entry name" value="His_Pase_clade-2"/>
</dbReference>
<dbReference type="InterPro" id="IPR029033">
    <property type="entry name" value="His_PPase_superfam"/>
</dbReference>
<dbReference type="InterPro" id="IPR050645">
    <property type="entry name" value="Histidine_acid_phosphatase"/>
</dbReference>
<dbReference type="PANTHER" id="PTHR11567">
    <property type="entry name" value="ACID PHOSPHATASE-RELATED"/>
    <property type="match status" value="1"/>
</dbReference>
<dbReference type="PANTHER" id="PTHR11567:SF180">
    <property type="entry name" value="LYSOSOMAL ACID PHOSPHATASE"/>
    <property type="match status" value="1"/>
</dbReference>
<dbReference type="Pfam" id="PF00328">
    <property type="entry name" value="His_Phos_2"/>
    <property type="match status" value="1"/>
</dbReference>
<dbReference type="SUPFAM" id="SSF53254">
    <property type="entry name" value="Phosphoglycerate mutase-like"/>
    <property type="match status" value="1"/>
</dbReference>
<dbReference type="PROSITE" id="PS00616">
    <property type="entry name" value="HIS_ACID_PHOSPHAT_1"/>
    <property type="match status" value="1"/>
</dbReference>
<dbReference type="PROSITE" id="PS00778">
    <property type="entry name" value="HIS_ACID_PHOSPHAT_2"/>
    <property type="match status" value="1"/>
</dbReference>
<gene>
    <name type="primary">Acp2</name>
</gene>
<feature type="signal peptide">
    <location>
        <begin position="1"/>
        <end position="30"/>
    </location>
</feature>
<feature type="chain" id="PRO_0000023962" description="Lysosomal acid phosphatase">
    <location>
        <begin position="31"/>
        <end position="423"/>
    </location>
</feature>
<feature type="topological domain" description="Lumenal" evidence="3">
    <location>
        <begin position="31"/>
        <end position="380"/>
    </location>
</feature>
<feature type="transmembrane region" description="Helical" evidence="3">
    <location>
        <begin position="381"/>
        <end position="401"/>
    </location>
</feature>
<feature type="topological domain" description="Cytoplasmic" evidence="3">
    <location>
        <begin position="402"/>
        <end position="423"/>
    </location>
</feature>
<feature type="active site" description="Nucleophile" evidence="1">
    <location>
        <position position="42"/>
    </location>
</feature>
<feature type="active site" description="Proton donor" evidence="1">
    <location>
        <position position="287"/>
    </location>
</feature>
<feature type="glycosylation site" description="N-linked (GlcNAc...) asparagine" evidence="3">
    <location>
        <position position="92"/>
    </location>
</feature>
<feature type="glycosylation site" description="N-linked (GlcNAc...) asparagine" evidence="3">
    <location>
        <position position="133"/>
    </location>
</feature>
<feature type="glycosylation site" description="N-linked (GlcNAc...) asparagine" evidence="3">
    <location>
        <position position="167"/>
    </location>
</feature>
<feature type="glycosylation site" description="N-linked (GlcNAc...) asparagine" evidence="3">
    <location>
        <position position="177"/>
    </location>
</feature>
<feature type="glycosylation site" description="N-linked (GlcNAc...) asparagine" evidence="3">
    <location>
        <position position="191"/>
    </location>
</feature>
<feature type="glycosylation site" description="N-linked (GlcNAc...) asparagine" evidence="3">
    <location>
        <position position="197"/>
    </location>
</feature>
<feature type="glycosylation site" description="N-linked (GlcNAc...) asparagine" evidence="3">
    <location>
        <position position="267"/>
    </location>
</feature>
<feature type="glycosylation site" description="N-linked (GlcNAc...) asparagine" evidence="3">
    <location>
        <position position="322"/>
    </location>
</feature>
<feature type="glycosylation site" description="N-linked (GlcNAc...) asparagine" evidence="3">
    <location>
        <position position="331"/>
    </location>
</feature>
<feature type="disulfide bond" evidence="1">
    <location>
        <begin position="159"/>
        <end position="370"/>
    </location>
</feature>
<feature type="disulfide bond" evidence="1">
    <location>
        <begin position="212"/>
        <end position="310"/>
    </location>
</feature>
<feature type="disulfide bond" evidence="1">
    <location>
        <begin position="345"/>
        <end position="349"/>
    </location>
</feature>
<organism>
    <name type="scientific">Rattus norvegicus</name>
    <name type="common">Rat</name>
    <dbReference type="NCBI Taxonomy" id="10116"/>
    <lineage>
        <taxon>Eukaryota</taxon>
        <taxon>Metazoa</taxon>
        <taxon>Chordata</taxon>
        <taxon>Craniata</taxon>
        <taxon>Vertebrata</taxon>
        <taxon>Euteleostomi</taxon>
        <taxon>Mammalia</taxon>
        <taxon>Eutheria</taxon>
        <taxon>Euarchontoglires</taxon>
        <taxon>Glires</taxon>
        <taxon>Rodentia</taxon>
        <taxon>Myomorpha</taxon>
        <taxon>Muroidea</taxon>
        <taxon>Muridae</taxon>
        <taxon>Murinae</taxon>
        <taxon>Rattus</taxon>
    </lineage>
</organism>
<reference key="1">
    <citation type="journal article" date="1989" name="Biochem. Biophys. Res. Commun.">
        <title>Isolation and sequencing of a cDNA clone encoding acid phosphatase in rat liver lysosomes.</title>
        <authorList>
            <person name="Himeno M."/>
            <person name="Fujita H."/>
            <person name="Noguchi Y."/>
            <person name="Kono A."/>
            <person name="Kato K."/>
        </authorList>
    </citation>
    <scope>NUCLEOTIDE SEQUENCE [MRNA]</scope>
</reference>
<reference key="2">
    <citation type="submission" date="2007-09" db="UniProtKB">
        <authorList>
            <person name="Lubec G."/>
            <person name="Kang S.U."/>
            <person name="Lubec S."/>
        </authorList>
    </citation>
    <scope>PROTEIN SEQUENCE OF 35-41; 154-161; 255-266 AND 349-364</scope>
    <scope>IDENTIFICATION BY MASS SPECTROMETRY</scope>
    <source>
        <strain>Sprague-Dawley</strain>
        <tissue>Brain</tissue>
    </source>
</reference>
<accession>P20611</accession>
<sequence>MAGRQSGWSQAALLQFLLGMCLMVMPPIQARSLRFVTLLYRHGDRSPVKAYPKDPYQEEKWPQGFGQLTKEGMLQHWELGQALRQRYHGFLNASYHRQEVYVRSTDFDRTLMSAEANLAGLFPPTEVQHFNPNISWQPIPVHTVPITEDRLLKFPLGPCPRYEQLQNETRQTPEYQNMSIQNAQFLDMVANETGLMNLTLETIWNVYDTLFCEQTHGLLLPPWASPQTVQALSQLKDFSFLFLFGIHDQVQKARLQGGVLLAQILKNLTLMATTSQFPKLLVYSAHDTTLVALQMALNVYNGKQAPYASCHIFELYQEDNGNFSVEMYFRNDSKKAPWPLTLPGCPHRCPLQDFLRLTEPVIPKDWQKECQLASDTADTEVIVALAVCGSILFLLIVLLLTVLFRMQAQPPGYHHVADREDHA</sequence>
<comment type="catalytic activity">
    <reaction>
        <text>a phosphate monoester + H2O = an alcohol + phosphate</text>
        <dbReference type="Rhea" id="RHEA:15017"/>
        <dbReference type="ChEBI" id="CHEBI:15377"/>
        <dbReference type="ChEBI" id="CHEBI:30879"/>
        <dbReference type="ChEBI" id="CHEBI:43474"/>
        <dbReference type="ChEBI" id="CHEBI:67140"/>
        <dbReference type="EC" id="3.1.3.2"/>
    </reaction>
</comment>
<comment type="subcellular location">
    <subcellularLocation>
        <location evidence="2">Lysosome membrane</location>
        <topology evidence="3">Single-pass membrane protein</topology>
        <orientation evidence="2">Lumenal side</orientation>
    </subcellularLocation>
    <subcellularLocation>
        <location evidence="2">Lysosome lumen</location>
    </subcellularLocation>
    <text evidence="2">The soluble form arises by proteolytic processing of the membrane-bound form.</text>
</comment>
<comment type="PTM">
    <text evidence="1">The membrane-bound form is converted to the soluble form by sequential proteolytic processing. First, the C-terminal cytoplasmic tail is removed. Cleavage by a lysosomal protease releases the soluble form in the lysosome lumen (By similarity).</text>
</comment>
<comment type="similarity">
    <text evidence="4">Belongs to the histidine acid phosphatase family.</text>
</comment>